<proteinExistence type="inferred from homology"/>
<reference key="1">
    <citation type="journal article" date="2007" name="PLoS Genet.">
        <title>Patterns and implications of gene gain and loss in the evolution of Prochlorococcus.</title>
        <authorList>
            <person name="Kettler G.C."/>
            <person name="Martiny A.C."/>
            <person name="Huang K."/>
            <person name="Zucker J."/>
            <person name="Coleman M.L."/>
            <person name="Rodrigue S."/>
            <person name="Chen F."/>
            <person name="Lapidus A."/>
            <person name="Ferriera S."/>
            <person name="Johnson J."/>
            <person name="Steglich C."/>
            <person name="Church G.M."/>
            <person name="Richardson P."/>
            <person name="Chisholm S.W."/>
        </authorList>
    </citation>
    <scope>NUCLEOTIDE SEQUENCE [LARGE SCALE GENOMIC DNA]</scope>
    <source>
        <strain>AS9601</strain>
    </source>
</reference>
<evidence type="ECO:0000255" key="1">
    <source>
        <dbReference type="HAMAP-Rule" id="MF_01305"/>
    </source>
</evidence>
<evidence type="ECO:0000305" key="2"/>
<dbReference type="EMBL" id="CP000551">
    <property type="protein sequence ID" value="ABM69611.1"/>
    <property type="molecule type" value="Genomic_DNA"/>
</dbReference>
<dbReference type="RefSeq" id="WP_011375864.1">
    <property type="nucleotide sequence ID" value="NC_008816.1"/>
</dbReference>
<dbReference type="SMR" id="A2BPA0"/>
<dbReference type="STRING" id="146891.A9601_03231"/>
<dbReference type="KEGG" id="pmb:A9601_03231"/>
<dbReference type="eggNOG" id="ENOG5030SSF">
    <property type="taxonomic scope" value="Bacteria"/>
</dbReference>
<dbReference type="HOGENOM" id="CLU_2829784_0_0_3"/>
<dbReference type="OrthoDB" id="466474at2"/>
<dbReference type="Proteomes" id="UP000002590">
    <property type="component" value="Chromosome"/>
</dbReference>
<dbReference type="GO" id="GO:0009539">
    <property type="term" value="C:photosystem II reaction center"/>
    <property type="evidence" value="ECO:0007669"/>
    <property type="project" value="InterPro"/>
</dbReference>
<dbReference type="GO" id="GO:0031676">
    <property type="term" value="C:plasma membrane-derived thylakoid membrane"/>
    <property type="evidence" value="ECO:0007669"/>
    <property type="project" value="UniProtKB-SubCell"/>
</dbReference>
<dbReference type="GO" id="GO:0015979">
    <property type="term" value="P:photosynthesis"/>
    <property type="evidence" value="ECO:0007669"/>
    <property type="project" value="UniProtKB-UniRule"/>
</dbReference>
<dbReference type="Gene3D" id="6.10.250.2070">
    <property type="match status" value="1"/>
</dbReference>
<dbReference type="HAMAP" id="MF_01305">
    <property type="entry name" value="PSII_PsbJ"/>
    <property type="match status" value="1"/>
</dbReference>
<dbReference type="InterPro" id="IPR002682">
    <property type="entry name" value="PSII_PsbJ"/>
</dbReference>
<dbReference type="InterPro" id="IPR037267">
    <property type="entry name" value="PSII_PsbJ_sf"/>
</dbReference>
<dbReference type="NCBIfam" id="NF002722">
    <property type="entry name" value="PRK02565.1"/>
    <property type="match status" value="1"/>
</dbReference>
<dbReference type="PANTHER" id="PTHR34812">
    <property type="entry name" value="PHOTOSYSTEM II REACTION CENTER PROTEIN J"/>
    <property type="match status" value="1"/>
</dbReference>
<dbReference type="PANTHER" id="PTHR34812:SF3">
    <property type="entry name" value="PHOTOSYSTEM II REACTION CENTER PROTEIN J"/>
    <property type="match status" value="1"/>
</dbReference>
<dbReference type="Pfam" id="PF01788">
    <property type="entry name" value="PsbJ"/>
    <property type="match status" value="1"/>
</dbReference>
<dbReference type="SUPFAM" id="SSF161021">
    <property type="entry name" value="Photosystem II reaction center protein J, PsbJ"/>
    <property type="match status" value="1"/>
</dbReference>
<keyword id="KW-0472">Membrane</keyword>
<keyword id="KW-0602">Photosynthesis</keyword>
<keyword id="KW-0604">Photosystem II</keyword>
<keyword id="KW-0674">Reaction center</keyword>
<keyword id="KW-0793">Thylakoid</keyword>
<keyword id="KW-0812">Transmembrane</keyword>
<keyword id="KW-1133">Transmembrane helix</keyword>
<sequence length="65" mass="6946">MSKLKGPDGRIPDRLPDGRPAVAWERRWTEGTLPLWLVATAGGIAVIFVLGIFFYGSYQGVGAGG</sequence>
<comment type="function">
    <text evidence="1">One of the components of the core complex of photosystem II (PSII). PSII is a light-driven water:plastoquinone oxidoreductase that uses light energy to abstract electrons from H(2)O, generating O(2) and a proton gradient subsequently used for ATP formation. It consists of a core antenna complex that captures photons, and an electron transfer chain that converts photonic excitation into a charge separation.</text>
</comment>
<comment type="subunit">
    <text evidence="2">PSII is composed of 1 copy each of membrane proteins PsbA, PsbB, PsbC, PsbD, PsbE, PsbF, PsbH, PsbI, PsbJ, PsbK, PsbL, PsbM, PsbT, PsbX, PsbY, Psb30/Ycf12, peripheral proteins PsbO, CyanoQ (PsbQ), PsbU, PsbV and a large number of cofactors. It forms dimeric complexes.</text>
</comment>
<comment type="subcellular location">
    <subcellularLocation>
        <location evidence="1">Cellular thylakoid membrane</location>
        <topology evidence="1">Single-pass membrane protein</topology>
    </subcellularLocation>
</comment>
<comment type="similarity">
    <text evidence="1">Belongs to the PsbJ family.</text>
</comment>
<protein>
    <recommendedName>
        <fullName evidence="1">Photosystem II reaction center protein J</fullName>
        <shortName evidence="1">PSII-J</shortName>
    </recommendedName>
</protein>
<organism>
    <name type="scientific">Prochlorococcus marinus (strain AS9601)</name>
    <dbReference type="NCBI Taxonomy" id="146891"/>
    <lineage>
        <taxon>Bacteria</taxon>
        <taxon>Bacillati</taxon>
        <taxon>Cyanobacteriota</taxon>
        <taxon>Cyanophyceae</taxon>
        <taxon>Synechococcales</taxon>
        <taxon>Prochlorococcaceae</taxon>
        <taxon>Prochlorococcus</taxon>
    </lineage>
</organism>
<accession>A2BPA0</accession>
<gene>
    <name evidence="1" type="primary">psbJ</name>
    <name type="ordered locus">A9601_03231</name>
</gene>
<feature type="chain" id="PRO_0000292226" description="Photosystem II reaction center protein J">
    <location>
        <begin position="1"/>
        <end position="65"/>
    </location>
</feature>
<feature type="transmembrane region" description="Helical" evidence="1">
    <location>
        <begin position="35"/>
        <end position="55"/>
    </location>
</feature>
<name>PSBJ_PROMS</name>